<proteinExistence type="evidence at transcript level"/>
<organism>
    <name type="scientific">Pyricularia oryzae (strain 70-15 / ATCC MYA-4617 / FGSC 8958)</name>
    <name type="common">Rice blast fungus</name>
    <name type="synonym">Magnaporthe oryzae</name>
    <dbReference type="NCBI Taxonomy" id="242507"/>
    <lineage>
        <taxon>Eukaryota</taxon>
        <taxon>Fungi</taxon>
        <taxon>Dikarya</taxon>
        <taxon>Ascomycota</taxon>
        <taxon>Pezizomycotina</taxon>
        <taxon>Sordariomycetes</taxon>
        <taxon>Sordariomycetidae</taxon>
        <taxon>Magnaporthales</taxon>
        <taxon>Pyriculariaceae</taxon>
        <taxon>Pyricularia</taxon>
    </lineage>
</organism>
<dbReference type="EC" id="1.1.1.-" evidence="6"/>
<dbReference type="EMBL" id="CM001233">
    <property type="protein sequence ID" value="EHA52502.1"/>
    <property type="molecule type" value="Genomic_DNA"/>
</dbReference>
<dbReference type="RefSeq" id="XP_003712309.1">
    <property type="nucleotide sequence ID" value="XM_003712261.1"/>
</dbReference>
<dbReference type="SMR" id="G4N290"/>
<dbReference type="STRING" id="242507.G4N290"/>
<dbReference type="EnsemblFungi" id="MGG_12982T0">
    <property type="protein sequence ID" value="MGG_12982T0"/>
    <property type="gene ID" value="MGG_12982"/>
</dbReference>
<dbReference type="GeneID" id="2677059"/>
<dbReference type="KEGG" id="mgr:MGG_12982"/>
<dbReference type="VEuPathDB" id="FungiDB:MGG_12982"/>
<dbReference type="eggNOG" id="KOG0725">
    <property type="taxonomic scope" value="Eukaryota"/>
</dbReference>
<dbReference type="HOGENOM" id="CLU_010194_1_0_1"/>
<dbReference type="InParanoid" id="G4N290"/>
<dbReference type="OMA" id="PMINSNE"/>
<dbReference type="OrthoDB" id="5840532at2759"/>
<dbReference type="Proteomes" id="UP000009058">
    <property type="component" value="Chromosome 3"/>
</dbReference>
<dbReference type="GO" id="GO:0016491">
    <property type="term" value="F:oxidoreductase activity"/>
    <property type="evidence" value="ECO:0007669"/>
    <property type="project" value="UniProtKB-KW"/>
</dbReference>
<dbReference type="CDD" id="cd05233">
    <property type="entry name" value="SDR_c"/>
    <property type="match status" value="1"/>
</dbReference>
<dbReference type="FunFam" id="3.40.50.720:FF:000084">
    <property type="entry name" value="Short-chain dehydrogenase reductase"/>
    <property type="match status" value="1"/>
</dbReference>
<dbReference type="Gene3D" id="3.40.50.720">
    <property type="entry name" value="NAD(P)-binding Rossmann-like Domain"/>
    <property type="match status" value="1"/>
</dbReference>
<dbReference type="InterPro" id="IPR036291">
    <property type="entry name" value="NAD(P)-bd_dom_sf"/>
</dbReference>
<dbReference type="InterPro" id="IPR020904">
    <property type="entry name" value="Sc_DH/Rdtase_CS"/>
</dbReference>
<dbReference type="InterPro" id="IPR002347">
    <property type="entry name" value="SDR_fam"/>
</dbReference>
<dbReference type="PANTHER" id="PTHR24321">
    <property type="entry name" value="DEHYDROGENASES, SHORT CHAIN"/>
    <property type="match status" value="1"/>
</dbReference>
<dbReference type="PANTHER" id="PTHR24321:SF12">
    <property type="entry name" value="SHORT-CHAIN DEHYDROGENASE_REDUCTASE FAMILY, PUTATIVE (AFU_ORTHOLOGUE AFUA_5G14340)-RELATED"/>
    <property type="match status" value="1"/>
</dbReference>
<dbReference type="Pfam" id="PF13561">
    <property type="entry name" value="adh_short_C2"/>
    <property type="match status" value="1"/>
</dbReference>
<dbReference type="PRINTS" id="PR00081">
    <property type="entry name" value="GDHRDH"/>
</dbReference>
<dbReference type="PRINTS" id="PR00080">
    <property type="entry name" value="SDRFAMILY"/>
</dbReference>
<dbReference type="SUPFAM" id="SSF51735">
    <property type="entry name" value="NAD(P)-binding Rossmann-fold domains"/>
    <property type="match status" value="1"/>
</dbReference>
<dbReference type="PROSITE" id="PS00061">
    <property type="entry name" value="ADH_SHORT"/>
    <property type="match status" value="1"/>
</dbReference>
<protein>
    <recommendedName>
        <fullName evidence="4">Short-chain dehydrogenase RED2</fullName>
        <ecNumber evidence="6">1.1.1.-</ecNumber>
    </recommendedName>
    <alternativeName>
        <fullName evidence="4">Pyriculol/pyriculariol biosynthesis cluster protein RED2</fullName>
    </alternativeName>
</protein>
<name>RED2_PYRO7</name>
<feature type="chain" id="PRO_0000446269" description="Short-chain dehydrogenase RED2">
    <location>
        <begin position="1"/>
        <end position="278"/>
    </location>
</feature>
<feature type="active site" description="Proton donor" evidence="2">
    <location>
        <position position="178"/>
    </location>
</feature>
<feature type="active site" description="Lowers pKa of active site Tyr" evidence="2">
    <location>
        <position position="182"/>
    </location>
</feature>
<feature type="binding site" evidence="1">
    <location>
        <position position="15"/>
    </location>
    <ligand>
        <name>NADP(+)</name>
        <dbReference type="ChEBI" id="CHEBI:58349"/>
    </ligand>
</feature>
<feature type="binding site" evidence="1">
    <location>
        <position position="70"/>
    </location>
    <ligand>
        <name>NADP(+)</name>
        <dbReference type="ChEBI" id="CHEBI:58349"/>
    </ligand>
</feature>
<feature type="binding site" evidence="1">
    <location>
        <position position="132"/>
    </location>
    <ligand>
        <name>NADP(+)</name>
        <dbReference type="ChEBI" id="CHEBI:58349"/>
    </ligand>
</feature>
<feature type="binding site" evidence="2">
    <location>
        <position position="178"/>
    </location>
    <ligand>
        <name>NADP(+)</name>
        <dbReference type="ChEBI" id="CHEBI:58349"/>
    </ligand>
</feature>
<feature type="binding site" evidence="2">
    <location>
        <position position="182"/>
    </location>
    <ligand>
        <name>NADP(+)</name>
        <dbReference type="ChEBI" id="CHEBI:58349"/>
    </ligand>
</feature>
<feature type="binding site" evidence="2">
    <location>
        <position position="211"/>
    </location>
    <ligand>
        <name>NADP(+)</name>
        <dbReference type="ChEBI" id="CHEBI:58349"/>
    </ligand>
</feature>
<feature type="binding site" evidence="1">
    <location>
        <position position="213"/>
    </location>
    <ligand>
        <name>NADP(+)</name>
        <dbReference type="ChEBI" id="CHEBI:58349"/>
    </ligand>
</feature>
<evidence type="ECO:0000250" key="1">
    <source>
        <dbReference type="UniProtKB" id="L0E2Z4"/>
    </source>
</evidence>
<evidence type="ECO:0000250" key="2">
    <source>
        <dbReference type="UniProtKB" id="O93868"/>
    </source>
</evidence>
<evidence type="ECO:0000269" key="3">
    <source>
    </source>
</evidence>
<evidence type="ECO:0000303" key="4">
    <source>
    </source>
</evidence>
<evidence type="ECO:0000305" key="5"/>
<evidence type="ECO:0000305" key="6">
    <source>
    </source>
</evidence>
<reference key="1">
    <citation type="journal article" date="2005" name="Nature">
        <title>The genome sequence of the rice blast fungus Magnaporthe grisea.</title>
        <authorList>
            <person name="Dean R.A."/>
            <person name="Talbot N.J."/>
            <person name="Ebbole D.J."/>
            <person name="Farman M.L."/>
            <person name="Mitchell T.K."/>
            <person name="Orbach M.J."/>
            <person name="Thon M.R."/>
            <person name="Kulkarni R."/>
            <person name="Xu J.-R."/>
            <person name="Pan H."/>
            <person name="Read N.D."/>
            <person name="Lee Y.-H."/>
            <person name="Carbone I."/>
            <person name="Brown D."/>
            <person name="Oh Y.Y."/>
            <person name="Donofrio N."/>
            <person name="Jeong J.S."/>
            <person name="Soanes D.M."/>
            <person name="Djonovic S."/>
            <person name="Kolomiets E."/>
            <person name="Rehmeyer C."/>
            <person name="Li W."/>
            <person name="Harding M."/>
            <person name="Kim S."/>
            <person name="Lebrun M.-H."/>
            <person name="Bohnert H."/>
            <person name="Coughlan S."/>
            <person name="Butler J."/>
            <person name="Calvo S.E."/>
            <person name="Ma L.-J."/>
            <person name="Nicol R."/>
            <person name="Purcell S."/>
            <person name="Nusbaum C."/>
            <person name="Galagan J.E."/>
            <person name="Birren B.W."/>
        </authorList>
    </citation>
    <scope>NUCLEOTIDE SEQUENCE [LARGE SCALE GENOMIC DNA]</scope>
    <source>
        <strain>70-15 / ATCC MYA-4617 / FGSC 8958</strain>
    </source>
</reference>
<reference key="2">
    <citation type="journal article" date="2017" name="Microbiology">
        <title>Unravelling the biosynthesis of pyriculol in the rice blast fungus Magnaporthe oryzae.</title>
        <authorList>
            <person name="Jacob S."/>
            <person name="Groetsch T."/>
            <person name="Foster A.J."/>
            <person name="Schueffler A."/>
            <person name="Rieger P.H."/>
            <person name="Sandjo L.P."/>
            <person name="Liermann J.C."/>
            <person name="Opatz T."/>
            <person name="Thines E."/>
        </authorList>
    </citation>
    <scope>IDENTIFICATION</scope>
    <scope>INDUCTION</scope>
    <scope>FUNCTION</scope>
    <scope>PATHWAY</scope>
</reference>
<gene>
    <name evidence="4" type="primary">RED2</name>
    <name type="ORF">MGG_12982</name>
</gene>
<comment type="function">
    <text evidence="3 6">Short-chain dehydrogenase; part of the gene cluster that mediates the biosynthesis of pyriculol and pyriculariol, two heptaketides that induce lesion formation upon application on rice leaves but are dispensable for pathogenicity (PubMed:27902426). The highly reducing polyketide synthase synthesizes the heptaketide backbone of pyriculol and pyriculariol (PubMed:27902426). Pyriculol and pyriculariol contain several hydroxyl moieties and double bonds, so it can be assumed that several reduction steps occur during biosynthesis. These reactions could be executed by PKS19 itself or partly by the tailoring enzymes OXR1, OXR2, RED1, RED2 or RED3, identified within the cluster (Probable). The FAD-linked oxidoreductase OXR1 is the only tailoring enzyme for which the function has been determined yet, and is involved in the oxidation of dihydropyriculol and dihydropyriculariol into pyriculol and pyriculariol, respectively (PubMed:27902426).</text>
</comment>
<comment type="pathway">
    <text evidence="6">Polyketide biosynthesis.</text>
</comment>
<comment type="induction">
    <text evidence="3">Expression is increased in rice-extract medium (REM) and is correlated with the production of pyriculol.</text>
</comment>
<comment type="similarity">
    <text evidence="5">Belongs to the short-chain dehydrogenases/reductases (SDR) family.</text>
</comment>
<keyword id="KW-0521">NADP</keyword>
<keyword id="KW-0560">Oxidoreductase</keyword>
<keyword id="KW-1185">Reference proteome</keyword>
<sequence>MNTTGSAFVIGASGIGRACALAFARRGVSGLVVADVDLQAAESLAAECRAEAGSAGTADALGCAEATRVDVADERSVELAVSFARRVLGRVDYCVNSAGIGVKLANEIADASPVEFEAMFQVNVKGTFLVTRAVSALMKTQDPVPVLRDSPGRGTTRGCIVILGSAAAFAATPKMVQYTTAKHAVLGLTKSAALDNAAHGIRVNSVCPSWVDTPMVRRALQDVPELEQTIRTSVPMGRIALAEEVADAVMFLCSPGASYATGCNMILDGGTTLTTHLG</sequence>
<accession>G4N290</accession>